<dbReference type="EMBL" id="CR859331">
    <property type="protein sequence ID" value="CAH91508.1"/>
    <property type="molecule type" value="mRNA"/>
</dbReference>
<dbReference type="EMBL" id="CR860065">
    <property type="protein sequence ID" value="CAH92213.1"/>
    <property type="molecule type" value="mRNA"/>
</dbReference>
<dbReference type="RefSeq" id="NP_001126294.1">
    <property type="nucleotide sequence ID" value="NM_001132822.1"/>
</dbReference>
<dbReference type="SMR" id="Q5R7P7"/>
<dbReference type="FunCoup" id="Q5R7P7">
    <property type="interactions" value="1097"/>
</dbReference>
<dbReference type="STRING" id="9601.ENSPPYP00000022945"/>
<dbReference type="Ensembl" id="ENSPPYT00000023912.3">
    <property type="protein sequence ID" value="ENSPPYP00000022945.3"/>
    <property type="gene ID" value="ENSPPYG00000020497.3"/>
</dbReference>
<dbReference type="GeneID" id="100173271"/>
<dbReference type="KEGG" id="pon:100173271"/>
<dbReference type="CTD" id="51616"/>
<dbReference type="eggNOG" id="KOG3334">
    <property type="taxonomic scope" value="Eukaryota"/>
</dbReference>
<dbReference type="GeneTree" id="ENSGT00940000161697"/>
<dbReference type="HOGENOM" id="CLU_068315_2_0_1"/>
<dbReference type="InParanoid" id="Q5R7P7"/>
<dbReference type="OMA" id="DDNDTMI"/>
<dbReference type="OrthoDB" id="341924at2759"/>
<dbReference type="Proteomes" id="UP000001595">
    <property type="component" value="Chromosome X"/>
</dbReference>
<dbReference type="GO" id="GO:0005669">
    <property type="term" value="C:transcription factor TFIID complex"/>
    <property type="evidence" value="ECO:0007669"/>
    <property type="project" value="Ensembl"/>
</dbReference>
<dbReference type="GO" id="GO:0033276">
    <property type="term" value="C:transcription factor TFTC complex"/>
    <property type="evidence" value="ECO:0007669"/>
    <property type="project" value="Ensembl"/>
</dbReference>
<dbReference type="GO" id="GO:0003677">
    <property type="term" value="F:DNA binding"/>
    <property type="evidence" value="ECO:0007669"/>
    <property type="project" value="UniProtKB-KW"/>
</dbReference>
<dbReference type="GO" id="GO:0046982">
    <property type="term" value="F:protein heterodimerization activity"/>
    <property type="evidence" value="ECO:0007669"/>
    <property type="project" value="InterPro"/>
</dbReference>
<dbReference type="GO" id="GO:0016251">
    <property type="term" value="F:RNA polymerase II general transcription initiation factor activity"/>
    <property type="evidence" value="ECO:0007669"/>
    <property type="project" value="TreeGrafter"/>
</dbReference>
<dbReference type="GO" id="GO:0006352">
    <property type="term" value="P:DNA-templated transcription initiation"/>
    <property type="evidence" value="ECO:0007669"/>
    <property type="project" value="InterPro"/>
</dbReference>
<dbReference type="GO" id="GO:0043066">
    <property type="term" value="P:negative regulation of apoptotic process"/>
    <property type="evidence" value="ECO:0007669"/>
    <property type="project" value="Ensembl"/>
</dbReference>
<dbReference type="GO" id="GO:0000122">
    <property type="term" value="P:negative regulation of transcription by RNA polymerase II"/>
    <property type="evidence" value="ECO:0007669"/>
    <property type="project" value="Ensembl"/>
</dbReference>
<dbReference type="GO" id="GO:0030307">
    <property type="term" value="P:positive regulation of cell growth"/>
    <property type="evidence" value="ECO:0007669"/>
    <property type="project" value="Ensembl"/>
</dbReference>
<dbReference type="GO" id="GO:0050821">
    <property type="term" value="P:protein stabilization"/>
    <property type="evidence" value="ECO:0007669"/>
    <property type="project" value="Ensembl"/>
</dbReference>
<dbReference type="CDD" id="cd07979">
    <property type="entry name" value="HFD_TAF9"/>
    <property type="match status" value="1"/>
</dbReference>
<dbReference type="FunFam" id="1.10.20.10:FF:000018">
    <property type="entry name" value="Transcription initiation factor TFIID subunit 9"/>
    <property type="match status" value="1"/>
</dbReference>
<dbReference type="Gene3D" id="1.10.20.10">
    <property type="entry name" value="Histone, subunit A"/>
    <property type="match status" value="1"/>
</dbReference>
<dbReference type="InterPro" id="IPR009072">
    <property type="entry name" value="Histone-fold"/>
</dbReference>
<dbReference type="InterPro" id="IPR003162">
    <property type="entry name" value="TFIID-31"/>
</dbReference>
<dbReference type="InterPro" id="IPR051431">
    <property type="entry name" value="TFIID_subunit_9"/>
</dbReference>
<dbReference type="PANTHER" id="PTHR48068">
    <property type="entry name" value="TAF9 RNA POLYMERASE II, TATA BOX-BINDING PROTEIN (TBP)-ASSOCIATED FACTOR"/>
    <property type="match status" value="1"/>
</dbReference>
<dbReference type="PANTHER" id="PTHR48068:SF5">
    <property type="entry name" value="TRANSCRIPTION INITIATION FACTOR TFIID SUBUNIT 9B"/>
    <property type="match status" value="1"/>
</dbReference>
<dbReference type="Pfam" id="PF02291">
    <property type="entry name" value="TFIID-31kDa"/>
    <property type="match status" value="1"/>
</dbReference>
<dbReference type="SUPFAM" id="SSF47113">
    <property type="entry name" value="Histone-fold"/>
    <property type="match status" value="1"/>
</dbReference>
<accession>Q5R7P7</accession>
<accession>Q5R9Q2</accession>
<gene>
    <name type="primary">TAF9B</name>
</gene>
<proteinExistence type="evidence at transcript level"/>
<keyword id="KW-0007">Acetylation</keyword>
<keyword id="KW-0238">DNA-binding</keyword>
<keyword id="KW-0539">Nucleus</keyword>
<keyword id="KW-0597">Phosphoprotein</keyword>
<keyword id="KW-1185">Reference proteome</keyword>
<keyword id="KW-0804">Transcription</keyword>
<keyword id="KW-0805">Transcription regulation</keyword>
<feature type="chain" id="PRO_0000293547" description="Transcription initiation factor TFIID subunit 9B">
    <location>
        <begin position="1"/>
        <end position="251"/>
    </location>
</feature>
<feature type="region of interest" description="Disordered" evidence="3">
    <location>
        <begin position="229"/>
        <end position="251"/>
    </location>
</feature>
<feature type="modified residue" description="N-acetylmethionine" evidence="2">
    <location>
        <position position="1"/>
    </location>
</feature>
<feature type="modified residue" description="Phosphoserine" evidence="2">
    <location>
        <position position="147"/>
    </location>
</feature>
<feature type="modified residue" description="Phosphothreonine" evidence="2">
    <location>
        <position position="159"/>
    </location>
</feature>
<feature type="modified residue" description="Phosphothreonine" evidence="2">
    <location>
        <position position="174"/>
    </location>
</feature>
<feature type="modified residue" description="Phosphoserine" evidence="2">
    <location>
        <position position="177"/>
    </location>
</feature>
<feature type="sequence conflict" description="In Ref. 1; CAH91508." evidence="4" ref="1">
    <original>E</original>
    <variation>G</variation>
    <location>
        <position position="41"/>
    </location>
</feature>
<feature type="sequence conflict" description="In Ref. 1; CAH91508." evidence="4" ref="1">
    <original>D</original>
    <variation>G</variation>
    <location>
        <position position="94"/>
    </location>
</feature>
<organism>
    <name type="scientific">Pongo abelii</name>
    <name type="common">Sumatran orangutan</name>
    <name type="synonym">Pongo pygmaeus abelii</name>
    <dbReference type="NCBI Taxonomy" id="9601"/>
    <lineage>
        <taxon>Eukaryota</taxon>
        <taxon>Metazoa</taxon>
        <taxon>Chordata</taxon>
        <taxon>Craniata</taxon>
        <taxon>Vertebrata</taxon>
        <taxon>Euteleostomi</taxon>
        <taxon>Mammalia</taxon>
        <taxon>Eutheria</taxon>
        <taxon>Euarchontoglires</taxon>
        <taxon>Primates</taxon>
        <taxon>Haplorrhini</taxon>
        <taxon>Catarrhini</taxon>
        <taxon>Hominidae</taxon>
        <taxon>Pongo</taxon>
    </lineage>
</organism>
<evidence type="ECO:0000250" key="1"/>
<evidence type="ECO:0000250" key="2">
    <source>
        <dbReference type="UniProtKB" id="Q9HBM6"/>
    </source>
</evidence>
<evidence type="ECO:0000256" key="3">
    <source>
        <dbReference type="SAM" id="MobiDB-lite"/>
    </source>
</evidence>
<evidence type="ECO:0000305" key="4"/>
<protein>
    <recommendedName>
        <fullName>Transcription initiation factor TFIID subunit 9B</fullName>
    </recommendedName>
</protein>
<reference key="1">
    <citation type="submission" date="2004-11" db="EMBL/GenBank/DDBJ databases">
        <authorList>
            <consortium name="The German cDNA consortium"/>
        </authorList>
    </citation>
    <scope>NUCLEOTIDE SEQUENCE [LARGE SCALE MRNA]</scope>
    <source>
        <tissue>Brain cortex</tissue>
        <tissue>Kidney</tissue>
    </source>
</reference>
<comment type="function">
    <text evidence="1">Essential for cell viability. TAF9 and TAF9B are involved in transcriptional activation as well as repression of distinct but overlapping sets of genes. May have a role in gene regulation associated with apoptosis. TAFs are components of the transcription factor IID (TFIID) complex, the TBP-free TAFII complex (TFTC), the PCAF histone acetylase complex and the STAGA transcription coactivator-HAT complex. TFIID or TFTC are essential for the regulation of RNA polymerase II-mediated transcription (By similarity).</text>
</comment>
<comment type="subunit">
    <text evidence="1">Binds TAF5 and TAF6. Component of TFIID and the TATA-binding protein-free TAF complex (TFTC). TFIID is composed of TATA binding protein (TBP) and a number of TBP-associated factors (TAFs). Binds N-terminal domain of p53/TP53 which is essential for transcription (By similarity).</text>
</comment>
<comment type="subcellular location">
    <subcellularLocation>
        <location evidence="1">Nucleus</location>
    </subcellularLocation>
</comment>
<comment type="similarity">
    <text evidence="4">Belongs to the TAF9 family.</text>
</comment>
<sequence>MESGKMAPPKNAPRDALVMAQILKDMGITEYEPRVINQMLEFAFRYVTTILDDAKIYSSHAKKPNVDADDVRLAIQCRADQSFTSPPPRDFLLDIARQKNQTPLPLIKPYAGPRLPPDRYCLTAPNYRLKSLIKKGPNQGRLVPRLSVGAVSSKPTTPTIATPQTVSVPNKVATPMSVTSQRFTVQIPPSQSTPVKPVPATTAVQNVLINPSMIGPKNILITTNMVSSQNTANEANPLKRKHEDDDDNDIM</sequence>
<name>TAF9B_PONAB</name>